<protein>
    <recommendedName>
        <fullName evidence="1">Ribosomal RNA small subunit methyltransferase H</fullName>
        <ecNumber evidence="1">2.1.1.199</ecNumber>
    </recommendedName>
    <alternativeName>
        <fullName evidence="1">16S rRNA m(4)C1402 methyltransferase</fullName>
    </alternativeName>
    <alternativeName>
        <fullName evidence="1">rRNA (cytosine-N(4)-)-methyltransferase RsmH</fullName>
    </alternativeName>
</protein>
<dbReference type="EC" id="2.1.1.199" evidence="1"/>
<dbReference type="EMBL" id="AM746676">
    <property type="protein sequence ID" value="CAN91815.1"/>
    <property type="molecule type" value="Genomic_DNA"/>
</dbReference>
<dbReference type="SMR" id="A9FI25"/>
<dbReference type="STRING" id="448385.sce1657"/>
<dbReference type="KEGG" id="scl:sce1657"/>
<dbReference type="eggNOG" id="COG0275">
    <property type="taxonomic scope" value="Bacteria"/>
</dbReference>
<dbReference type="HOGENOM" id="CLU_038422_3_0_7"/>
<dbReference type="OrthoDB" id="9806637at2"/>
<dbReference type="BioCyc" id="SCEL448385:SCE_RS08530-MONOMER"/>
<dbReference type="Proteomes" id="UP000002139">
    <property type="component" value="Chromosome"/>
</dbReference>
<dbReference type="GO" id="GO:0005737">
    <property type="term" value="C:cytoplasm"/>
    <property type="evidence" value="ECO:0007669"/>
    <property type="project" value="UniProtKB-SubCell"/>
</dbReference>
<dbReference type="GO" id="GO:0071424">
    <property type="term" value="F:rRNA (cytosine-N4-)-methyltransferase activity"/>
    <property type="evidence" value="ECO:0007669"/>
    <property type="project" value="UniProtKB-UniRule"/>
</dbReference>
<dbReference type="GO" id="GO:0070475">
    <property type="term" value="P:rRNA base methylation"/>
    <property type="evidence" value="ECO:0007669"/>
    <property type="project" value="UniProtKB-UniRule"/>
</dbReference>
<dbReference type="Gene3D" id="1.10.150.170">
    <property type="entry name" value="Putative methyltransferase TM0872, insert domain"/>
    <property type="match status" value="1"/>
</dbReference>
<dbReference type="Gene3D" id="3.40.50.150">
    <property type="entry name" value="Vaccinia Virus protein VP39"/>
    <property type="match status" value="1"/>
</dbReference>
<dbReference type="HAMAP" id="MF_01007">
    <property type="entry name" value="16SrRNA_methyltr_H"/>
    <property type="match status" value="1"/>
</dbReference>
<dbReference type="InterPro" id="IPR002903">
    <property type="entry name" value="RsmH"/>
</dbReference>
<dbReference type="InterPro" id="IPR023397">
    <property type="entry name" value="SAM-dep_MeTrfase_MraW_recog"/>
</dbReference>
<dbReference type="InterPro" id="IPR029063">
    <property type="entry name" value="SAM-dependent_MTases_sf"/>
</dbReference>
<dbReference type="NCBIfam" id="TIGR00006">
    <property type="entry name" value="16S rRNA (cytosine(1402)-N(4))-methyltransferase RsmH"/>
    <property type="match status" value="1"/>
</dbReference>
<dbReference type="PANTHER" id="PTHR11265:SF0">
    <property type="entry name" value="12S RRNA N4-METHYLCYTIDINE METHYLTRANSFERASE"/>
    <property type="match status" value="1"/>
</dbReference>
<dbReference type="PANTHER" id="PTHR11265">
    <property type="entry name" value="S-ADENOSYL-METHYLTRANSFERASE MRAW"/>
    <property type="match status" value="1"/>
</dbReference>
<dbReference type="Pfam" id="PF01795">
    <property type="entry name" value="Methyltransf_5"/>
    <property type="match status" value="1"/>
</dbReference>
<dbReference type="PIRSF" id="PIRSF004486">
    <property type="entry name" value="MraW"/>
    <property type="match status" value="1"/>
</dbReference>
<dbReference type="SUPFAM" id="SSF81799">
    <property type="entry name" value="Putative methyltransferase TM0872, insert domain"/>
    <property type="match status" value="1"/>
</dbReference>
<dbReference type="SUPFAM" id="SSF53335">
    <property type="entry name" value="S-adenosyl-L-methionine-dependent methyltransferases"/>
    <property type="match status" value="1"/>
</dbReference>
<organism>
    <name type="scientific">Sorangium cellulosum (strain So ce56)</name>
    <name type="common">Polyangium cellulosum (strain So ce56)</name>
    <dbReference type="NCBI Taxonomy" id="448385"/>
    <lineage>
        <taxon>Bacteria</taxon>
        <taxon>Pseudomonadati</taxon>
        <taxon>Myxococcota</taxon>
        <taxon>Polyangia</taxon>
        <taxon>Polyangiales</taxon>
        <taxon>Polyangiaceae</taxon>
        <taxon>Sorangium</taxon>
    </lineage>
</organism>
<keyword id="KW-0963">Cytoplasm</keyword>
<keyword id="KW-0489">Methyltransferase</keyword>
<keyword id="KW-1185">Reference proteome</keyword>
<keyword id="KW-0698">rRNA processing</keyword>
<keyword id="KW-0949">S-adenosyl-L-methionine</keyword>
<keyword id="KW-0808">Transferase</keyword>
<accession>A9FI25</accession>
<evidence type="ECO:0000255" key="1">
    <source>
        <dbReference type="HAMAP-Rule" id="MF_01007"/>
    </source>
</evidence>
<evidence type="ECO:0000256" key="2">
    <source>
        <dbReference type="SAM" id="MobiDB-lite"/>
    </source>
</evidence>
<name>RSMH_SORC5</name>
<gene>
    <name evidence="1" type="primary">rsmH</name>
    <name type="synonym">mraW</name>
    <name type="ordered locus">sce1657</name>
</gene>
<sequence>MNVVNVVPMHLPPPPPRPRGEQHVSVLGREVLAALSPVSEGVYVDATLGAGGHTATILETPGARVIGIDRDERALAIARARLARAGDRVTYVHGEFSEIERHLAALGVPQVDGLLADIGVSSMQLDDPGRGMSFRAEGPLDMRMDSSRGETALELIERLSDEELADLIYRYGEERRSRRVARCIKQAADSGELVTTLDLRRAVVRAVGPARIGGVDPATRTFQALRIAVNGELDQLEALLEAAPRIIAPGGVLAVISFHSLEDRIVKRALREPEVWEPLTKKPVTAGDDEVEGNPRARSAKLRAARRVGGAEALA</sequence>
<proteinExistence type="inferred from homology"/>
<reference key="1">
    <citation type="journal article" date="2007" name="Nat. Biotechnol.">
        <title>Complete genome sequence of the myxobacterium Sorangium cellulosum.</title>
        <authorList>
            <person name="Schneiker S."/>
            <person name="Perlova O."/>
            <person name="Kaiser O."/>
            <person name="Gerth K."/>
            <person name="Alici A."/>
            <person name="Altmeyer M.O."/>
            <person name="Bartels D."/>
            <person name="Bekel T."/>
            <person name="Beyer S."/>
            <person name="Bode E."/>
            <person name="Bode H.B."/>
            <person name="Bolten C.J."/>
            <person name="Choudhuri J.V."/>
            <person name="Doss S."/>
            <person name="Elnakady Y.A."/>
            <person name="Frank B."/>
            <person name="Gaigalat L."/>
            <person name="Goesmann A."/>
            <person name="Groeger C."/>
            <person name="Gross F."/>
            <person name="Jelsbak L."/>
            <person name="Jelsbak L."/>
            <person name="Kalinowski J."/>
            <person name="Kegler C."/>
            <person name="Knauber T."/>
            <person name="Konietzny S."/>
            <person name="Kopp M."/>
            <person name="Krause L."/>
            <person name="Krug D."/>
            <person name="Linke B."/>
            <person name="Mahmud T."/>
            <person name="Martinez-Arias R."/>
            <person name="McHardy A.C."/>
            <person name="Merai M."/>
            <person name="Meyer F."/>
            <person name="Mormann S."/>
            <person name="Munoz-Dorado J."/>
            <person name="Perez J."/>
            <person name="Pradella S."/>
            <person name="Rachid S."/>
            <person name="Raddatz G."/>
            <person name="Rosenau F."/>
            <person name="Rueckert C."/>
            <person name="Sasse F."/>
            <person name="Scharfe M."/>
            <person name="Schuster S.C."/>
            <person name="Suen G."/>
            <person name="Treuner-Lange A."/>
            <person name="Velicer G.J."/>
            <person name="Vorholter F.-J."/>
            <person name="Weissman K.J."/>
            <person name="Welch R.D."/>
            <person name="Wenzel S.C."/>
            <person name="Whitworth D.E."/>
            <person name="Wilhelm S."/>
            <person name="Wittmann C."/>
            <person name="Bloecker H."/>
            <person name="Puehler A."/>
            <person name="Mueller R."/>
        </authorList>
    </citation>
    <scope>NUCLEOTIDE SEQUENCE [LARGE SCALE GENOMIC DNA]</scope>
    <source>
        <strain>So ce56</strain>
    </source>
</reference>
<feature type="chain" id="PRO_0000387131" description="Ribosomal RNA small subunit methyltransferase H">
    <location>
        <begin position="1"/>
        <end position="315"/>
    </location>
</feature>
<feature type="region of interest" description="Disordered" evidence="2">
    <location>
        <begin position="1"/>
        <end position="21"/>
    </location>
</feature>
<feature type="region of interest" description="Disordered" evidence="2">
    <location>
        <begin position="281"/>
        <end position="315"/>
    </location>
</feature>
<feature type="binding site" evidence="1">
    <location>
        <begin position="51"/>
        <end position="53"/>
    </location>
    <ligand>
        <name>S-adenosyl-L-methionine</name>
        <dbReference type="ChEBI" id="CHEBI:59789"/>
    </ligand>
</feature>
<feature type="binding site" evidence="1">
    <location>
        <position position="69"/>
    </location>
    <ligand>
        <name>S-adenosyl-L-methionine</name>
        <dbReference type="ChEBI" id="CHEBI:59789"/>
    </ligand>
</feature>
<feature type="binding site" evidence="1">
    <location>
        <position position="96"/>
    </location>
    <ligand>
        <name>S-adenosyl-L-methionine</name>
        <dbReference type="ChEBI" id="CHEBI:59789"/>
    </ligand>
</feature>
<feature type="binding site" evidence="1">
    <location>
        <position position="117"/>
    </location>
    <ligand>
        <name>S-adenosyl-L-methionine</name>
        <dbReference type="ChEBI" id="CHEBI:59789"/>
    </ligand>
</feature>
<feature type="binding site" evidence="1">
    <location>
        <position position="124"/>
    </location>
    <ligand>
        <name>S-adenosyl-L-methionine</name>
        <dbReference type="ChEBI" id="CHEBI:59789"/>
    </ligand>
</feature>
<comment type="function">
    <text evidence="1">Specifically methylates the N4 position of cytidine in position 1402 (C1402) of 16S rRNA.</text>
</comment>
<comment type="catalytic activity">
    <reaction evidence="1">
        <text>cytidine(1402) in 16S rRNA + S-adenosyl-L-methionine = N(4)-methylcytidine(1402) in 16S rRNA + S-adenosyl-L-homocysteine + H(+)</text>
        <dbReference type="Rhea" id="RHEA:42928"/>
        <dbReference type="Rhea" id="RHEA-COMP:10286"/>
        <dbReference type="Rhea" id="RHEA-COMP:10287"/>
        <dbReference type="ChEBI" id="CHEBI:15378"/>
        <dbReference type="ChEBI" id="CHEBI:57856"/>
        <dbReference type="ChEBI" id="CHEBI:59789"/>
        <dbReference type="ChEBI" id="CHEBI:74506"/>
        <dbReference type="ChEBI" id="CHEBI:82748"/>
        <dbReference type="EC" id="2.1.1.199"/>
    </reaction>
</comment>
<comment type="subcellular location">
    <subcellularLocation>
        <location evidence="1">Cytoplasm</location>
    </subcellularLocation>
</comment>
<comment type="similarity">
    <text evidence="1">Belongs to the methyltransferase superfamily. RsmH family.</text>
</comment>